<sequence>MELVMKDAQSLTVSETTFGRDFNEALVHQVVVAYAAGARQGTRAQKTRAEVTGSGKKPWRQKGTGRARSGSIKSPIWRSGGITFAAKPQDHSQKVNKKMYRGALKSILSELVRQDRLIIVEKFAVEAPKTKLLVQKLKDMALEDVMIVTHEVDENLFLAARNLYKVDVRDVTAIDPVSLIAFGKVVMTAEAVKQVEEMLA</sequence>
<proteinExistence type="inferred from homology"/>
<name>RL4_MORMO</name>
<reference key="1">
    <citation type="journal article" date="1995" name="Biochem. Cell Biol.">
        <title>Regulation of the Escherichia coli S10 ribosomal protein operon by heterologous L4 ribosomal proteins.</title>
        <authorList>
            <person name="Zengel J.M."/>
            <person name="Vorozheikina D."/>
            <person name="Li X."/>
            <person name="Lindahl L."/>
        </authorList>
    </citation>
    <scope>NUCLEOTIDE SEQUENCE [GENOMIC DNA]</scope>
    <scope>ABILITY TO REPRESS THE E.COLI S10 OPERON</scope>
</reference>
<reference key="2">
    <citation type="journal article" date="1999" name="J. Bacteriol.">
        <title>Phylogenetic analysis of L4-mediated autogenous control of the S10 ribosomal protein operon.</title>
        <authorList>
            <person name="Allen T."/>
            <person name="Shen P."/>
            <person name="Samsel L."/>
            <person name="Liu R."/>
            <person name="Lindahl L."/>
            <person name="Zengel J.M."/>
        </authorList>
    </citation>
    <scope>EVIDENCE FOR REGULATION OF THE S10 OPERON</scope>
</reference>
<protein>
    <recommendedName>
        <fullName evidence="3">Large ribosomal subunit protein uL4</fullName>
    </recommendedName>
    <alternativeName>
        <fullName>50S ribosomal protein L4</fullName>
    </alternativeName>
</protein>
<gene>
    <name type="primary">rplD</name>
</gene>
<organism>
    <name type="scientific">Morganella morganii</name>
    <name type="common">Proteus morganii</name>
    <dbReference type="NCBI Taxonomy" id="582"/>
    <lineage>
        <taxon>Bacteria</taxon>
        <taxon>Pseudomonadati</taxon>
        <taxon>Pseudomonadota</taxon>
        <taxon>Gammaproteobacteria</taxon>
        <taxon>Enterobacterales</taxon>
        <taxon>Morganellaceae</taxon>
        <taxon>Morganella</taxon>
    </lineage>
</organism>
<accession>P49226</accession>
<evidence type="ECO:0000250" key="1"/>
<evidence type="ECO:0000256" key="2">
    <source>
        <dbReference type="SAM" id="MobiDB-lite"/>
    </source>
</evidence>
<evidence type="ECO:0000305" key="3"/>
<comment type="function">
    <text evidence="1">One of the primary rRNA binding proteins, this protein initially binds near the 5'-end of the 23S rRNA. It is important during the early stages of 50S assembly. It makes multiple contacts with different domains of the 23S rRNA in the assembled 50S subunit and ribosome (By similarity).</text>
</comment>
<comment type="function">
    <text evidence="1">Protein L4 is a both a transcriptional repressor and a translational repressor protein. It regulates transcription of the S10 operon (to which L4 belongs) by causing premature termination of transcription within the S10 leader. L4 controls the translation of the S10 operon by binding to its mRNA (By similarity).</text>
</comment>
<comment type="function">
    <text>This protein when expressed in E.coli represses both transcription and translation of the endogenous S10 operon. As the M.morganii S10 leader can be regulated in vitro by the E.coli L4 protein this strongly suggests the endogenous protein controls its own S10 operon in a similar fashion.</text>
</comment>
<comment type="function">
    <text evidence="1">Forms part of the polypeptide exit tunnel.</text>
</comment>
<comment type="subunit">
    <text>Part of the 50S ribosomal subunit.</text>
</comment>
<comment type="similarity">
    <text evidence="3">Belongs to the universal ribosomal protein uL4 family.</text>
</comment>
<dbReference type="EMBL" id="U37798">
    <property type="protein sequence ID" value="AAB41513.1"/>
    <property type="molecule type" value="Genomic_DNA"/>
</dbReference>
<dbReference type="SMR" id="P49226"/>
<dbReference type="STRING" id="582.AL531_14830"/>
<dbReference type="GO" id="GO:1990904">
    <property type="term" value="C:ribonucleoprotein complex"/>
    <property type="evidence" value="ECO:0007669"/>
    <property type="project" value="UniProtKB-KW"/>
</dbReference>
<dbReference type="GO" id="GO:0005840">
    <property type="term" value="C:ribosome"/>
    <property type="evidence" value="ECO:0007669"/>
    <property type="project" value="UniProtKB-KW"/>
</dbReference>
<dbReference type="GO" id="GO:0019843">
    <property type="term" value="F:rRNA binding"/>
    <property type="evidence" value="ECO:0007669"/>
    <property type="project" value="UniProtKB-UniRule"/>
</dbReference>
<dbReference type="GO" id="GO:0003735">
    <property type="term" value="F:structural constituent of ribosome"/>
    <property type="evidence" value="ECO:0007669"/>
    <property type="project" value="InterPro"/>
</dbReference>
<dbReference type="GO" id="GO:0006353">
    <property type="term" value="P:DNA-templated transcription termination"/>
    <property type="evidence" value="ECO:0007669"/>
    <property type="project" value="UniProtKB-KW"/>
</dbReference>
<dbReference type="GO" id="GO:0006417">
    <property type="term" value="P:regulation of translation"/>
    <property type="evidence" value="ECO:0007669"/>
    <property type="project" value="UniProtKB-KW"/>
</dbReference>
<dbReference type="GO" id="GO:0006412">
    <property type="term" value="P:translation"/>
    <property type="evidence" value="ECO:0007669"/>
    <property type="project" value="UniProtKB-UniRule"/>
</dbReference>
<dbReference type="FunFam" id="3.40.1370.10:FF:000001">
    <property type="entry name" value="50S ribosomal protein L4"/>
    <property type="match status" value="1"/>
</dbReference>
<dbReference type="Gene3D" id="3.40.1370.10">
    <property type="match status" value="1"/>
</dbReference>
<dbReference type="HAMAP" id="MF_01328_B">
    <property type="entry name" value="Ribosomal_uL4_B"/>
    <property type="match status" value="1"/>
</dbReference>
<dbReference type="InterPro" id="IPR002136">
    <property type="entry name" value="Ribosomal_uL4"/>
</dbReference>
<dbReference type="InterPro" id="IPR013005">
    <property type="entry name" value="Ribosomal_uL4-like"/>
</dbReference>
<dbReference type="InterPro" id="IPR023574">
    <property type="entry name" value="Ribosomal_uL4_dom_sf"/>
</dbReference>
<dbReference type="NCBIfam" id="TIGR03953">
    <property type="entry name" value="rplD_bact"/>
    <property type="match status" value="1"/>
</dbReference>
<dbReference type="PANTHER" id="PTHR10746">
    <property type="entry name" value="50S RIBOSOMAL PROTEIN L4"/>
    <property type="match status" value="1"/>
</dbReference>
<dbReference type="PANTHER" id="PTHR10746:SF6">
    <property type="entry name" value="LARGE RIBOSOMAL SUBUNIT PROTEIN UL4M"/>
    <property type="match status" value="1"/>
</dbReference>
<dbReference type="Pfam" id="PF00573">
    <property type="entry name" value="Ribosomal_L4"/>
    <property type="match status" value="1"/>
</dbReference>
<dbReference type="SUPFAM" id="SSF52166">
    <property type="entry name" value="Ribosomal protein L4"/>
    <property type="match status" value="1"/>
</dbReference>
<feature type="chain" id="PRO_0000129235" description="Large ribosomal subunit protein uL4">
    <location>
        <begin position="1"/>
        <end position="200"/>
    </location>
</feature>
<feature type="region of interest" description="Disordered" evidence="2">
    <location>
        <begin position="44"/>
        <end position="70"/>
    </location>
</feature>
<keyword id="KW-0678">Repressor</keyword>
<keyword id="KW-0687">Ribonucleoprotein</keyword>
<keyword id="KW-0689">Ribosomal protein</keyword>
<keyword id="KW-0694">RNA-binding</keyword>
<keyword id="KW-0699">rRNA-binding</keyword>
<keyword id="KW-0804">Transcription</keyword>
<keyword id="KW-0805">Transcription regulation</keyword>
<keyword id="KW-0806">Transcription termination</keyword>
<keyword id="KW-0810">Translation regulation</keyword>